<reference key="1">
    <citation type="journal article" date="2007" name="Proc. Natl. Acad. Sci. U.S.A.">
        <title>Genome sequencing and comparative analysis of Saccharomyces cerevisiae strain YJM789.</title>
        <authorList>
            <person name="Wei W."/>
            <person name="McCusker J.H."/>
            <person name="Hyman R.W."/>
            <person name="Jones T."/>
            <person name="Ning Y."/>
            <person name="Cao Z."/>
            <person name="Gu Z."/>
            <person name="Bruno D."/>
            <person name="Miranda M."/>
            <person name="Nguyen M."/>
            <person name="Wilhelmy J."/>
            <person name="Komp C."/>
            <person name="Tamse R."/>
            <person name="Wang X."/>
            <person name="Jia P."/>
            <person name="Luedi P."/>
            <person name="Oefner P.J."/>
            <person name="David L."/>
            <person name="Dietrich F.S."/>
            <person name="Li Y."/>
            <person name="Davis R.W."/>
            <person name="Steinmetz L.M."/>
        </authorList>
    </citation>
    <scope>NUCLEOTIDE SEQUENCE [LARGE SCALE GENOMIC DNA]</scope>
    <source>
        <strain>YJM789</strain>
    </source>
</reference>
<evidence type="ECO:0000250" key="1"/>
<evidence type="ECO:0000305" key="2"/>
<feature type="chain" id="PRO_0000317864" description="Autophagy protein 5">
    <location>
        <begin position="1"/>
        <end position="294"/>
    </location>
</feature>
<feature type="cross-link" description="Glycyl lysine isopeptide (Lys-Gly) (interchain with G-Cter in ATG12)" evidence="1">
    <location>
        <position position="149"/>
    </location>
</feature>
<proteinExistence type="inferred from homology"/>
<name>ATG5_YEAS7</name>
<comment type="function">
    <text evidence="1">Involved in cytoplasm to vacuole transport (Cvt) and autophagic vesicle formation. Autophagy is essential for maintenance of amino acid levels and protein synthesis under nitrogen starvation. Required for selective autophagic degradation of the nucleus (nucleophagy). Also required for mitophagy, which eliminates defective or superfluous mitochondria in order to fulfill cellular energy requirements and prevent excess ROS production. Conjugation with ATG12, through a ubiquitin-like conjugating system involving ATG7 as an E1-like activating enzyme and ATG10 as an E2-like conjugating enzyme, is essential for its function. The ATG12-ATG5 conjugate acts as an E3-like enzyme which is required for lipidation of ATG8 and ATG8 association to the vesicle membranes. ATG12-ATG5 rearranges the ATG3 catalytic center and enhances its E2 activity. Plays a role in the regulation of filamentous growth and chronological longevity (By similarity).</text>
</comment>
<comment type="subunit">
    <text evidence="1">Conjugated with ATG12. The ATG5-ATG12 conjugate forms a complex with several units of ATG16. The ATG12-ATG5 conjugate also associates with ATG3.</text>
</comment>
<comment type="subcellular location">
    <subcellularLocation>
        <location evidence="1">Preautophagosomal structure membrane</location>
        <topology evidence="1">Peripheral membrane protein</topology>
    </subcellularLocation>
    <text evidence="1">Localizes to the isolation membrane (IM), a membrane sac which is generated from the pre-autophagosomal structure (PAS). Ultimately, the IM expands to become a mature autophagosome. Also localizes to a dot at the junction between the IM and the vacuolar membrane, termed the vacuole-IM contact site (VICS). Correct localization to the PAS requires ATG21.</text>
</comment>
<comment type="PTM">
    <text evidence="1">Conjugated to ATG12; which is essential for autophagy. Conjugation with ATG12 involves ATG7 as an E1-like activating enzyme and ATG10 as an E2-like conjugating enzyme (By similarity).</text>
</comment>
<comment type="miscellaneous">
    <text evidence="1">Small amount of ATG5-ATG12 conjugate is enough to perform normal autophagy.</text>
</comment>
<comment type="similarity">
    <text evidence="2">Belongs to the ATG5 family.</text>
</comment>
<dbReference type="EMBL" id="AAFW02000135">
    <property type="protein sequence ID" value="EDN60997.1"/>
    <property type="molecule type" value="Genomic_DNA"/>
</dbReference>
<dbReference type="SMR" id="A6ZWA5"/>
<dbReference type="HOGENOM" id="CLU_051894_2_0_1"/>
<dbReference type="Proteomes" id="UP000007060">
    <property type="component" value="Unassembled WGS sequence"/>
</dbReference>
<dbReference type="GO" id="GO:0034274">
    <property type="term" value="C:Atg12-Atg5-Atg16 complex"/>
    <property type="evidence" value="ECO:0007669"/>
    <property type="project" value="TreeGrafter"/>
</dbReference>
<dbReference type="GO" id="GO:0005776">
    <property type="term" value="C:autophagosome"/>
    <property type="evidence" value="ECO:0007669"/>
    <property type="project" value="TreeGrafter"/>
</dbReference>
<dbReference type="GO" id="GO:0044233">
    <property type="term" value="C:mitochondria-associated endoplasmic reticulum membrane contact site"/>
    <property type="evidence" value="ECO:0007669"/>
    <property type="project" value="TreeGrafter"/>
</dbReference>
<dbReference type="GO" id="GO:0061908">
    <property type="term" value="C:phagophore"/>
    <property type="evidence" value="ECO:0007669"/>
    <property type="project" value="TreeGrafter"/>
</dbReference>
<dbReference type="GO" id="GO:0034045">
    <property type="term" value="C:phagophore assembly site membrane"/>
    <property type="evidence" value="ECO:0007669"/>
    <property type="project" value="UniProtKB-SubCell"/>
</dbReference>
<dbReference type="GO" id="GO:0019776">
    <property type="term" value="F:Atg8-family ligase activity"/>
    <property type="evidence" value="ECO:0007669"/>
    <property type="project" value="TreeGrafter"/>
</dbReference>
<dbReference type="GO" id="GO:0000422">
    <property type="term" value="P:autophagy of mitochondrion"/>
    <property type="evidence" value="ECO:0007669"/>
    <property type="project" value="TreeGrafter"/>
</dbReference>
<dbReference type="GO" id="GO:0006995">
    <property type="term" value="P:cellular response to nitrogen starvation"/>
    <property type="evidence" value="ECO:0007669"/>
    <property type="project" value="TreeGrafter"/>
</dbReference>
<dbReference type="GO" id="GO:0034727">
    <property type="term" value="P:piecemeal microautophagy of the nucleus"/>
    <property type="evidence" value="ECO:0007669"/>
    <property type="project" value="TreeGrafter"/>
</dbReference>
<dbReference type="GO" id="GO:0015031">
    <property type="term" value="P:protein transport"/>
    <property type="evidence" value="ECO:0007669"/>
    <property type="project" value="UniProtKB-KW"/>
</dbReference>
<dbReference type="Gene3D" id="3.10.20.620">
    <property type="match status" value="1"/>
</dbReference>
<dbReference type="Gene3D" id="1.10.246.190">
    <property type="entry name" value="Autophagy protein Apg5, helix rich domain"/>
    <property type="match status" value="1"/>
</dbReference>
<dbReference type="Gene3D" id="3.10.20.90">
    <property type="entry name" value="Phosphatidylinositol 3-kinase Catalytic Subunit, Chain A, domain 1"/>
    <property type="match status" value="1"/>
</dbReference>
<dbReference type="InterPro" id="IPR007239">
    <property type="entry name" value="Atg5"/>
</dbReference>
<dbReference type="InterPro" id="IPR048940">
    <property type="entry name" value="ATG5_HBR"/>
</dbReference>
<dbReference type="InterPro" id="IPR042526">
    <property type="entry name" value="Atg5_HR"/>
</dbReference>
<dbReference type="InterPro" id="IPR048939">
    <property type="entry name" value="ATG5_UblA"/>
</dbReference>
<dbReference type="InterPro" id="IPR042527">
    <property type="entry name" value="Atg5_UblA_dom_sf"/>
</dbReference>
<dbReference type="InterPro" id="IPR048318">
    <property type="entry name" value="ATG5_UblB"/>
</dbReference>
<dbReference type="PANTHER" id="PTHR13040">
    <property type="entry name" value="AUTOPHAGY PROTEIN 5"/>
    <property type="match status" value="1"/>
</dbReference>
<dbReference type="PANTHER" id="PTHR13040:SF2">
    <property type="entry name" value="AUTOPHAGY PROTEIN 5"/>
    <property type="match status" value="1"/>
</dbReference>
<dbReference type="Pfam" id="PF20637">
    <property type="entry name" value="ATG5_HBR"/>
    <property type="match status" value="1"/>
</dbReference>
<dbReference type="Pfam" id="PF20638">
    <property type="entry name" value="ATG5_UblA"/>
    <property type="match status" value="1"/>
</dbReference>
<dbReference type="Pfam" id="PF04106">
    <property type="entry name" value="ATG5_UblB"/>
    <property type="match status" value="1"/>
</dbReference>
<accession>A6ZWA5</accession>
<protein>
    <recommendedName>
        <fullName>Autophagy protein 5</fullName>
    </recommendedName>
</protein>
<sequence>MNDIKQLLWNGELNVLVSIDPSFLMKGSPREIAVLRIRVPRETYLVNYMPFIWNKIKSFLSFDPLTDSEKYFWFEHNKTPIPWNYPVGVLFDCLAGKSATFTTSFENQVKDVLTFLRIHLVMGDSLPPTIIPIASSKTQAEKFWFHQWKQVCFILNGSSKAIMSLSVNEARKFWGSVITRNFQDFIEISNKISSSRPRHIPLIIQTSRTSGTFRISQPTISMTGVNPTLKDIEGDILDVKEGINGNDVMVICQGIEIPWHMLLYDLYSKLRSFDGFLYITLVPIKGGDKASSEL</sequence>
<organism>
    <name type="scientific">Saccharomyces cerevisiae (strain YJM789)</name>
    <name type="common">Baker's yeast</name>
    <dbReference type="NCBI Taxonomy" id="307796"/>
    <lineage>
        <taxon>Eukaryota</taxon>
        <taxon>Fungi</taxon>
        <taxon>Dikarya</taxon>
        <taxon>Ascomycota</taxon>
        <taxon>Saccharomycotina</taxon>
        <taxon>Saccharomycetes</taxon>
        <taxon>Saccharomycetales</taxon>
        <taxon>Saccharomycetaceae</taxon>
        <taxon>Saccharomyces</taxon>
    </lineage>
</organism>
<keyword id="KW-0072">Autophagy</keyword>
<keyword id="KW-1017">Isopeptide bond</keyword>
<keyword id="KW-0472">Membrane</keyword>
<keyword id="KW-0653">Protein transport</keyword>
<keyword id="KW-0813">Transport</keyword>
<keyword id="KW-0832">Ubl conjugation</keyword>
<gene>
    <name type="primary">ATG5</name>
    <name type="ORF">SCY_5582</name>
</gene>